<evidence type="ECO:0000255" key="1">
    <source>
        <dbReference type="HAMAP-Rule" id="MF_00195"/>
    </source>
</evidence>
<protein>
    <recommendedName>
        <fullName evidence="1">GTPase Der</fullName>
    </recommendedName>
    <alternativeName>
        <fullName evidence="1">GTP-binding protein EngA</fullName>
    </alternativeName>
</protein>
<reference key="1">
    <citation type="journal article" date="2009" name="J. Bacteriol.">
        <title>Genomic sequencing reveals regulatory mutations and recombinational events in the widely used MC4100 lineage of Escherichia coli K-12.</title>
        <authorList>
            <person name="Ferenci T."/>
            <person name="Zhou Z."/>
            <person name="Betteridge T."/>
            <person name="Ren Y."/>
            <person name="Liu Y."/>
            <person name="Feng L."/>
            <person name="Reeves P.R."/>
            <person name="Wang L."/>
        </authorList>
    </citation>
    <scope>NUCLEOTIDE SEQUENCE [LARGE SCALE GENOMIC DNA]</scope>
    <source>
        <strain>K12 / MC4100 / BW2952</strain>
    </source>
</reference>
<keyword id="KW-0342">GTP-binding</keyword>
<keyword id="KW-0547">Nucleotide-binding</keyword>
<keyword id="KW-0677">Repeat</keyword>
<keyword id="KW-0690">Ribosome biogenesis</keyword>
<gene>
    <name evidence="1" type="primary">der</name>
    <name type="synonym">engA</name>
    <name type="ordered locus">BWG_2275</name>
</gene>
<feature type="chain" id="PRO_1000204035" description="GTPase Der">
    <location>
        <begin position="1"/>
        <end position="490"/>
    </location>
</feature>
<feature type="domain" description="EngA-type G 1">
    <location>
        <begin position="3"/>
        <end position="166"/>
    </location>
</feature>
<feature type="domain" description="EngA-type G 2">
    <location>
        <begin position="203"/>
        <end position="376"/>
    </location>
</feature>
<feature type="domain" description="KH-like" evidence="1">
    <location>
        <begin position="377"/>
        <end position="461"/>
    </location>
</feature>
<feature type="binding site" evidence="1">
    <location>
        <begin position="9"/>
        <end position="16"/>
    </location>
    <ligand>
        <name>GTP</name>
        <dbReference type="ChEBI" id="CHEBI:37565"/>
        <label>1</label>
    </ligand>
</feature>
<feature type="binding site" evidence="1">
    <location>
        <begin position="56"/>
        <end position="60"/>
    </location>
    <ligand>
        <name>GTP</name>
        <dbReference type="ChEBI" id="CHEBI:37565"/>
        <label>1</label>
    </ligand>
</feature>
<feature type="binding site" evidence="1">
    <location>
        <begin position="118"/>
        <end position="121"/>
    </location>
    <ligand>
        <name>GTP</name>
        <dbReference type="ChEBI" id="CHEBI:37565"/>
        <label>1</label>
    </ligand>
</feature>
<feature type="binding site" evidence="1">
    <location>
        <begin position="209"/>
        <end position="216"/>
    </location>
    <ligand>
        <name>GTP</name>
        <dbReference type="ChEBI" id="CHEBI:37565"/>
        <label>2</label>
    </ligand>
</feature>
<feature type="binding site" evidence="1">
    <location>
        <begin position="256"/>
        <end position="260"/>
    </location>
    <ligand>
        <name>GTP</name>
        <dbReference type="ChEBI" id="CHEBI:37565"/>
        <label>2</label>
    </ligand>
</feature>
<feature type="binding site" evidence="1">
    <location>
        <begin position="321"/>
        <end position="324"/>
    </location>
    <ligand>
        <name>GTP</name>
        <dbReference type="ChEBI" id="CHEBI:37565"/>
        <label>2</label>
    </ligand>
</feature>
<dbReference type="EMBL" id="CP001396">
    <property type="protein sequence ID" value="ACR64450.1"/>
    <property type="molecule type" value="Genomic_DNA"/>
</dbReference>
<dbReference type="RefSeq" id="WP_000249410.1">
    <property type="nucleotide sequence ID" value="NC_012759.1"/>
</dbReference>
<dbReference type="SMR" id="C4ZX86"/>
<dbReference type="GeneID" id="75206204"/>
<dbReference type="KEGG" id="ebw:BWG_2275"/>
<dbReference type="HOGENOM" id="CLU_016077_6_2_6"/>
<dbReference type="GO" id="GO:0005525">
    <property type="term" value="F:GTP binding"/>
    <property type="evidence" value="ECO:0007669"/>
    <property type="project" value="UniProtKB-UniRule"/>
</dbReference>
<dbReference type="GO" id="GO:0043022">
    <property type="term" value="F:ribosome binding"/>
    <property type="evidence" value="ECO:0007669"/>
    <property type="project" value="TreeGrafter"/>
</dbReference>
<dbReference type="GO" id="GO:0042254">
    <property type="term" value="P:ribosome biogenesis"/>
    <property type="evidence" value="ECO:0007669"/>
    <property type="project" value="UniProtKB-KW"/>
</dbReference>
<dbReference type="CDD" id="cd01894">
    <property type="entry name" value="EngA1"/>
    <property type="match status" value="1"/>
</dbReference>
<dbReference type="CDD" id="cd01895">
    <property type="entry name" value="EngA2"/>
    <property type="match status" value="1"/>
</dbReference>
<dbReference type="FunFam" id="3.30.300.20:FF:000004">
    <property type="entry name" value="GTPase Der"/>
    <property type="match status" value="1"/>
</dbReference>
<dbReference type="FunFam" id="3.40.50.300:FF:000040">
    <property type="entry name" value="GTPase Der"/>
    <property type="match status" value="1"/>
</dbReference>
<dbReference type="FunFam" id="3.40.50.300:FF:000057">
    <property type="entry name" value="GTPase Der"/>
    <property type="match status" value="1"/>
</dbReference>
<dbReference type="Gene3D" id="3.30.300.20">
    <property type="match status" value="1"/>
</dbReference>
<dbReference type="Gene3D" id="3.40.50.300">
    <property type="entry name" value="P-loop containing nucleotide triphosphate hydrolases"/>
    <property type="match status" value="2"/>
</dbReference>
<dbReference type="HAMAP" id="MF_00195">
    <property type="entry name" value="GTPase_Der"/>
    <property type="match status" value="1"/>
</dbReference>
<dbReference type="InterPro" id="IPR031166">
    <property type="entry name" value="G_ENGA"/>
</dbReference>
<dbReference type="InterPro" id="IPR006073">
    <property type="entry name" value="GTP-bd"/>
</dbReference>
<dbReference type="InterPro" id="IPR016484">
    <property type="entry name" value="GTPase_Der"/>
</dbReference>
<dbReference type="InterPro" id="IPR032859">
    <property type="entry name" value="KH_dom-like"/>
</dbReference>
<dbReference type="InterPro" id="IPR015946">
    <property type="entry name" value="KH_dom-like_a/b"/>
</dbReference>
<dbReference type="InterPro" id="IPR027417">
    <property type="entry name" value="P-loop_NTPase"/>
</dbReference>
<dbReference type="InterPro" id="IPR005225">
    <property type="entry name" value="Small_GTP-bd"/>
</dbReference>
<dbReference type="NCBIfam" id="TIGR03594">
    <property type="entry name" value="GTPase_EngA"/>
    <property type="match status" value="1"/>
</dbReference>
<dbReference type="NCBIfam" id="TIGR00231">
    <property type="entry name" value="small_GTP"/>
    <property type="match status" value="2"/>
</dbReference>
<dbReference type="PANTHER" id="PTHR43834">
    <property type="entry name" value="GTPASE DER"/>
    <property type="match status" value="1"/>
</dbReference>
<dbReference type="PANTHER" id="PTHR43834:SF6">
    <property type="entry name" value="GTPASE DER"/>
    <property type="match status" value="1"/>
</dbReference>
<dbReference type="Pfam" id="PF14714">
    <property type="entry name" value="KH_dom-like"/>
    <property type="match status" value="1"/>
</dbReference>
<dbReference type="Pfam" id="PF01926">
    <property type="entry name" value="MMR_HSR1"/>
    <property type="match status" value="2"/>
</dbReference>
<dbReference type="PIRSF" id="PIRSF006485">
    <property type="entry name" value="GTP-binding_EngA"/>
    <property type="match status" value="1"/>
</dbReference>
<dbReference type="PRINTS" id="PR00326">
    <property type="entry name" value="GTP1OBG"/>
</dbReference>
<dbReference type="SUPFAM" id="SSF52540">
    <property type="entry name" value="P-loop containing nucleoside triphosphate hydrolases"/>
    <property type="match status" value="2"/>
</dbReference>
<dbReference type="PROSITE" id="PS51712">
    <property type="entry name" value="G_ENGA"/>
    <property type="match status" value="2"/>
</dbReference>
<accession>C4ZX86</accession>
<organism>
    <name type="scientific">Escherichia coli (strain K12 / MC4100 / BW2952)</name>
    <dbReference type="NCBI Taxonomy" id="595496"/>
    <lineage>
        <taxon>Bacteria</taxon>
        <taxon>Pseudomonadati</taxon>
        <taxon>Pseudomonadota</taxon>
        <taxon>Gammaproteobacteria</taxon>
        <taxon>Enterobacterales</taxon>
        <taxon>Enterobacteriaceae</taxon>
        <taxon>Escherichia</taxon>
    </lineage>
</organism>
<name>DER_ECOBW</name>
<sequence length="490" mass="55036">MVPVVALVGRPNVGKSTLFNRLTRTRDALVADFPGLTRDRKYGRAEIEGREFICIDTGGIDGTEDGVETRMAEQSLLAIEEADVVLFMVDARAGLMPADEAIAKHLRSREKPTFLVANKTDGLDPDQAVVDFYSLGLGEIYPIAASHGRGVLSLLEHVLLPWMEDLAPQEEVDEDAEYWAQFEAEENGEEEEEDDFDPQSLPIKLAIVGRPNVGKSTLTNRILGEERVVVYDMPGTTRDSIYIPMERDGREYVLIDTAGVRKRGKITDAVEKFSVIKTLQAIEDANVVMLVIDAREGISDQDLSLLGFILNSGRSLVIVVNKWDGLSQEVKEQVKETLDFRLGFIDFARVHFISALHGSGVGNLFESVREAYDSSTRRVGTSMLTRIMTMAVEDHQPPLVRGRRVKLKYAHAGGYNPPIVVIHGNQVKDLPDSYKRYLMNYFRKSLDVMGSPIRIQFKEGENPYANKRNTLTPTQMRKRKRLMKHIKKNK</sequence>
<proteinExistence type="inferred from homology"/>
<comment type="function">
    <text evidence="1">GTPase that plays an essential role in the late steps of ribosome biogenesis.</text>
</comment>
<comment type="subunit">
    <text evidence="1">Associates with the 50S ribosomal subunit.</text>
</comment>
<comment type="similarity">
    <text evidence="1">Belongs to the TRAFAC class TrmE-Era-EngA-EngB-Septin-like GTPase superfamily. EngA (Der) GTPase family.</text>
</comment>